<organism>
    <name type="scientific">Thermofilum pendens (strain DSM 2475 / Hrk 5)</name>
    <dbReference type="NCBI Taxonomy" id="368408"/>
    <lineage>
        <taxon>Archaea</taxon>
        <taxon>Thermoproteota</taxon>
        <taxon>Thermoprotei</taxon>
        <taxon>Thermofilales</taxon>
        <taxon>Thermofilaceae</taxon>
        <taxon>Thermofilum</taxon>
    </lineage>
</organism>
<sequence length="178" mass="20575">MNAHEALAEIAGKMFGDNAKKVMMVLASNVEVSDEDLAKDLKMDPPELRKLLNDLFEARLVKYRRARDENIGWYKYYWRITDEPIQQILSDRKRLTLSILEKVLSLEENSETYVCPKCGTRYTVDEAENNNYTCEVCGEVLEPFDNTHRVEKLKRAIELLGNWDPSPKQQASRAIPHA</sequence>
<name>TFE_THEPD</name>
<accession>A1RY32</accession>
<keyword id="KW-0238">DNA-binding</keyword>
<keyword id="KW-1185">Reference proteome</keyword>
<keyword id="KW-0804">Transcription</keyword>
<keyword id="KW-0805">Transcription regulation</keyword>
<dbReference type="EMBL" id="CP000505">
    <property type="protein sequence ID" value="ABL78112.1"/>
    <property type="molecule type" value="Genomic_DNA"/>
</dbReference>
<dbReference type="RefSeq" id="WP_011752377.1">
    <property type="nucleotide sequence ID" value="NC_008698.1"/>
</dbReference>
<dbReference type="SMR" id="A1RY32"/>
<dbReference type="STRING" id="368408.Tpen_0710"/>
<dbReference type="EnsemblBacteria" id="ABL78112">
    <property type="protein sequence ID" value="ABL78112"/>
    <property type="gene ID" value="Tpen_0710"/>
</dbReference>
<dbReference type="GeneID" id="4601591"/>
<dbReference type="KEGG" id="tpe:Tpen_0710"/>
<dbReference type="eggNOG" id="arCOG04270">
    <property type="taxonomic scope" value="Archaea"/>
</dbReference>
<dbReference type="HOGENOM" id="CLU_100097_0_0_2"/>
<dbReference type="OrthoDB" id="5935at2157"/>
<dbReference type="Proteomes" id="UP000000641">
    <property type="component" value="Chromosome"/>
</dbReference>
<dbReference type="GO" id="GO:0003677">
    <property type="term" value="F:DNA binding"/>
    <property type="evidence" value="ECO:0007669"/>
    <property type="project" value="UniProtKB-KW"/>
</dbReference>
<dbReference type="GO" id="GO:0006355">
    <property type="term" value="P:regulation of DNA-templated transcription"/>
    <property type="evidence" value="ECO:0007669"/>
    <property type="project" value="InterPro"/>
</dbReference>
<dbReference type="GO" id="GO:0006367">
    <property type="term" value="P:transcription initiation at RNA polymerase II promoter"/>
    <property type="evidence" value="ECO:0007669"/>
    <property type="project" value="InterPro"/>
</dbReference>
<dbReference type="Gene3D" id="1.10.10.10">
    <property type="entry name" value="Winged helix-like DNA-binding domain superfamily/Winged helix DNA-binding domain"/>
    <property type="match status" value="1"/>
</dbReference>
<dbReference type="HAMAP" id="MF_01909">
    <property type="entry name" value="TFE_arch"/>
    <property type="match status" value="1"/>
</dbReference>
<dbReference type="InterPro" id="IPR016481">
    <property type="entry name" value="TF_E_archaea"/>
</dbReference>
<dbReference type="InterPro" id="IPR039997">
    <property type="entry name" value="TFE"/>
</dbReference>
<dbReference type="InterPro" id="IPR017919">
    <property type="entry name" value="TFIIE/TFIIEa_HTH"/>
</dbReference>
<dbReference type="InterPro" id="IPR002853">
    <property type="entry name" value="TFIIE_asu"/>
</dbReference>
<dbReference type="InterPro" id="IPR024550">
    <property type="entry name" value="TFIIEa/SarR/Rpc3_HTH_dom"/>
</dbReference>
<dbReference type="InterPro" id="IPR036388">
    <property type="entry name" value="WH-like_DNA-bd_sf"/>
</dbReference>
<dbReference type="InterPro" id="IPR036390">
    <property type="entry name" value="WH_DNA-bd_sf"/>
</dbReference>
<dbReference type="InterPro" id="IPR013137">
    <property type="entry name" value="Znf_TFIIB"/>
</dbReference>
<dbReference type="PANTHER" id="PTHR13097:SF7">
    <property type="entry name" value="GENERAL TRANSCRIPTION FACTOR IIE SUBUNIT 1"/>
    <property type="match status" value="1"/>
</dbReference>
<dbReference type="PANTHER" id="PTHR13097">
    <property type="entry name" value="TRANSCRIPTION INITIATION FACTOR IIE, ALPHA SUBUNIT"/>
    <property type="match status" value="1"/>
</dbReference>
<dbReference type="Pfam" id="PF02002">
    <property type="entry name" value="TFIIE_alpha"/>
    <property type="match status" value="1"/>
</dbReference>
<dbReference type="Pfam" id="PF08271">
    <property type="entry name" value="Zn_Ribbon_TF"/>
    <property type="match status" value="1"/>
</dbReference>
<dbReference type="PIRSF" id="PIRSF006373">
    <property type="entry name" value="TF_E_archaea"/>
    <property type="match status" value="1"/>
</dbReference>
<dbReference type="SMART" id="SM00531">
    <property type="entry name" value="TFIIE"/>
    <property type="match status" value="1"/>
</dbReference>
<dbReference type="SUPFAM" id="SSF46785">
    <property type="entry name" value="Winged helix' DNA-binding domain"/>
    <property type="match status" value="1"/>
</dbReference>
<dbReference type="SUPFAM" id="SSF57783">
    <property type="entry name" value="Zinc beta-ribbon"/>
    <property type="match status" value="1"/>
</dbReference>
<dbReference type="PROSITE" id="PS51344">
    <property type="entry name" value="HTH_TFE_IIE"/>
    <property type="match status" value="1"/>
</dbReference>
<reference key="1">
    <citation type="journal article" date="2008" name="J. Bacteriol.">
        <title>Genome sequence of Thermofilum pendens reveals an exceptional loss of biosynthetic pathways without genome reduction.</title>
        <authorList>
            <person name="Anderson I."/>
            <person name="Rodriguez J."/>
            <person name="Susanti D."/>
            <person name="Porat I."/>
            <person name="Reich C."/>
            <person name="Ulrich L.E."/>
            <person name="Elkins J.G."/>
            <person name="Mavromatis K."/>
            <person name="Lykidis A."/>
            <person name="Kim E."/>
            <person name="Thompson L.S."/>
            <person name="Nolan M."/>
            <person name="Land M."/>
            <person name="Copeland A."/>
            <person name="Lapidus A."/>
            <person name="Lucas S."/>
            <person name="Detter C."/>
            <person name="Zhulin I.B."/>
            <person name="Olsen G.J."/>
            <person name="Whitman W."/>
            <person name="Mukhopadhyay B."/>
            <person name="Bristow J."/>
            <person name="Kyrpides N."/>
        </authorList>
    </citation>
    <scope>NUCLEOTIDE SEQUENCE [LARGE SCALE GENOMIC DNA]</scope>
    <source>
        <strain>DSM 2475 / Hrk 5</strain>
    </source>
</reference>
<feature type="chain" id="PRO_0000326625" description="Transcription factor E">
    <location>
        <begin position="1"/>
        <end position="178"/>
    </location>
</feature>
<feature type="domain" description="HTH TFE/IIEalpha-type" evidence="1">
    <location>
        <begin position="3"/>
        <end position="86"/>
    </location>
</feature>
<evidence type="ECO:0000255" key="1">
    <source>
        <dbReference type="HAMAP-Rule" id="MF_01909"/>
    </source>
</evidence>
<gene>
    <name evidence="1" type="primary">tfe</name>
    <name type="ordered locus">Tpen_0710</name>
</gene>
<comment type="function">
    <text evidence="1">Transcription factor that plays a role in the activation of archaeal genes transcribed by RNA polymerase. Facilitates transcription initiation by enhancing TATA-box recognition by TATA-box-binding protein (Tbp), and transcription factor B (Tfb) and RNA polymerase recruitment. Not absolutely required for transcription in vitro, but particularly important in cases where Tbp or Tfb function is not optimal. It dynamically alters the nucleic acid-binding properties of RNA polymerases by stabilizing the initiation complex and destabilizing elongation complexes. Seems to translocate with the RNA polymerase following initiation and acts by binding to the non template strand of the transcription bubble in elongation complexes.</text>
</comment>
<comment type="subunit">
    <text evidence="1">Monomer. Interaction with RNA polymerase subunits RpoF and RpoE is necessary for Tfe stimulatory transcription activity. Able to interact with Tbp and RNA polymerase in the absence of DNA promoter. Interacts both with the preinitiation and elongation complexes.</text>
</comment>
<comment type="domain">
    <text evidence="1">The winged helix domain is involved in binding to DNA in the preinitiation complex.</text>
</comment>
<comment type="similarity">
    <text evidence="1">Belongs to the TFE family.</text>
</comment>
<proteinExistence type="inferred from homology"/>
<protein>
    <recommendedName>
        <fullName evidence="1">Transcription factor E</fullName>
        <shortName evidence="1">TFE</shortName>
    </recommendedName>
    <alternativeName>
        <fullName evidence="1">TFIIE subunit alpha homolog</fullName>
    </alternativeName>
    <alternativeName>
        <fullName evidence="1">Transcription initiation factor TFIIE</fullName>
    </alternativeName>
</protein>